<dbReference type="EMBL" id="AM295250">
    <property type="protein sequence ID" value="CAL27064.1"/>
    <property type="molecule type" value="Genomic_DNA"/>
</dbReference>
<dbReference type="RefSeq" id="WP_012664179.1">
    <property type="nucleotide sequence ID" value="NC_012121.1"/>
</dbReference>
<dbReference type="SMR" id="B9DLD8"/>
<dbReference type="GeneID" id="93795065"/>
<dbReference type="KEGG" id="sca:SCA_0151"/>
<dbReference type="eggNOG" id="COG1825">
    <property type="taxonomic scope" value="Bacteria"/>
</dbReference>
<dbReference type="HOGENOM" id="CLU_075939_2_1_9"/>
<dbReference type="OrthoDB" id="9790002at2"/>
<dbReference type="BioCyc" id="SCAR396513:SCA_RS00730-MONOMER"/>
<dbReference type="Proteomes" id="UP000000444">
    <property type="component" value="Chromosome"/>
</dbReference>
<dbReference type="GO" id="GO:0022625">
    <property type="term" value="C:cytosolic large ribosomal subunit"/>
    <property type="evidence" value="ECO:0007669"/>
    <property type="project" value="TreeGrafter"/>
</dbReference>
<dbReference type="GO" id="GO:0008097">
    <property type="term" value="F:5S rRNA binding"/>
    <property type="evidence" value="ECO:0007669"/>
    <property type="project" value="InterPro"/>
</dbReference>
<dbReference type="GO" id="GO:0003735">
    <property type="term" value="F:structural constituent of ribosome"/>
    <property type="evidence" value="ECO:0007669"/>
    <property type="project" value="InterPro"/>
</dbReference>
<dbReference type="GO" id="GO:0006412">
    <property type="term" value="P:translation"/>
    <property type="evidence" value="ECO:0007669"/>
    <property type="project" value="UniProtKB-UniRule"/>
</dbReference>
<dbReference type="CDD" id="cd00495">
    <property type="entry name" value="Ribosomal_L25_TL5_CTC"/>
    <property type="match status" value="1"/>
</dbReference>
<dbReference type="FunFam" id="2.40.240.10:FF:000013">
    <property type="entry name" value="50S ribosomal protein L25"/>
    <property type="match status" value="1"/>
</dbReference>
<dbReference type="Gene3D" id="2.170.120.20">
    <property type="entry name" value="Ribosomal protein L25, beta domain"/>
    <property type="match status" value="1"/>
</dbReference>
<dbReference type="Gene3D" id="2.40.240.10">
    <property type="entry name" value="Ribosomal Protein L25, Chain P"/>
    <property type="match status" value="1"/>
</dbReference>
<dbReference type="HAMAP" id="MF_01334">
    <property type="entry name" value="Ribosomal_bL25_CTC"/>
    <property type="match status" value="1"/>
</dbReference>
<dbReference type="InterPro" id="IPR020056">
    <property type="entry name" value="Rbsml_bL25/Gln-tRNA_synth_N"/>
</dbReference>
<dbReference type="InterPro" id="IPR011035">
    <property type="entry name" value="Ribosomal_bL25/Gln-tRNA_synth"/>
</dbReference>
<dbReference type="InterPro" id="IPR020057">
    <property type="entry name" value="Ribosomal_bL25_b-dom"/>
</dbReference>
<dbReference type="InterPro" id="IPR037121">
    <property type="entry name" value="Ribosomal_bL25_C"/>
</dbReference>
<dbReference type="InterPro" id="IPR001021">
    <property type="entry name" value="Ribosomal_bL25_long"/>
</dbReference>
<dbReference type="InterPro" id="IPR029751">
    <property type="entry name" value="Ribosomal_L25_dom"/>
</dbReference>
<dbReference type="InterPro" id="IPR020930">
    <property type="entry name" value="Ribosomal_uL5_bac-type"/>
</dbReference>
<dbReference type="NCBIfam" id="TIGR00731">
    <property type="entry name" value="bL25_bact_ctc"/>
    <property type="match status" value="1"/>
</dbReference>
<dbReference type="NCBIfam" id="NF004133">
    <property type="entry name" value="PRK05618.2-4"/>
    <property type="match status" value="1"/>
</dbReference>
<dbReference type="NCBIfam" id="NF004134">
    <property type="entry name" value="PRK05618.2-5"/>
    <property type="match status" value="1"/>
</dbReference>
<dbReference type="PANTHER" id="PTHR33284">
    <property type="entry name" value="RIBOSOMAL PROTEIN L25/GLN-TRNA SYNTHETASE, ANTI-CODON-BINDING DOMAIN-CONTAINING PROTEIN"/>
    <property type="match status" value="1"/>
</dbReference>
<dbReference type="PANTHER" id="PTHR33284:SF1">
    <property type="entry name" value="RIBOSOMAL PROTEIN L25_GLN-TRNA SYNTHETASE, ANTI-CODON-BINDING DOMAIN-CONTAINING PROTEIN"/>
    <property type="match status" value="1"/>
</dbReference>
<dbReference type="Pfam" id="PF01386">
    <property type="entry name" value="Ribosomal_L25p"/>
    <property type="match status" value="1"/>
</dbReference>
<dbReference type="Pfam" id="PF14693">
    <property type="entry name" value="Ribosomal_TL5_C"/>
    <property type="match status" value="1"/>
</dbReference>
<dbReference type="SUPFAM" id="SSF50715">
    <property type="entry name" value="Ribosomal protein L25-like"/>
    <property type="match status" value="1"/>
</dbReference>
<accession>B9DLD8</accession>
<name>RL25_STACT</name>
<evidence type="ECO:0000255" key="1">
    <source>
        <dbReference type="HAMAP-Rule" id="MF_01334"/>
    </source>
</evidence>
<evidence type="ECO:0000256" key="2">
    <source>
        <dbReference type="SAM" id="MobiDB-lite"/>
    </source>
</evidence>
<evidence type="ECO:0000305" key="3"/>
<gene>
    <name evidence="1" type="primary">rplY</name>
    <name evidence="1" type="synonym">ctc</name>
    <name type="ordered locus">Sca_0151</name>
</gene>
<protein>
    <recommendedName>
        <fullName evidence="1">Large ribosomal subunit protein bL25</fullName>
    </recommendedName>
    <alternativeName>
        <fullName evidence="3">50S ribosomal protein L25</fullName>
    </alternativeName>
    <alternativeName>
        <fullName evidence="1">General stress protein CTC</fullName>
    </alternativeName>
</protein>
<organism>
    <name type="scientific">Staphylococcus carnosus (strain TM300)</name>
    <dbReference type="NCBI Taxonomy" id="396513"/>
    <lineage>
        <taxon>Bacteria</taxon>
        <taxon>Bacillati</taxon>
        <taxon>Bacillota</taxon>
        <taxon>Bacilli</taxon>
        <taxon>Bacillales</taxon>
        <taxon>Staphylococcaceae</taxon>
        <taxon>Staphylococcus</taxon>
    </lineage>
</organism>
<keyword id="KW-1185">Reference proteome</keyword>
<keyword id="KW-0687">Ribonucleoprotein</keyword>
<keyword id="KW-0689">Ribosomal protein</keyword>
<keyword id="KW-0694">RNA-binding</keyword>
<keyword id="KW-0699">rRNA-binding</keyword>
<feature type="chain" id="PRO_1000166182" description="Large ribosomal subunit protein bL25">
    <location>
        <begin position="1"/>
        <end position="214"/>
    </location>
</feature>
<feature type="region of interest" description="Disordered" evidence="2">
    <location>
        <begin position="179"/>
        <end position="214"/>
    </location>
</feature>
<feature type="compositionally biased region" description="Acidic residues" evidence="2">
    <location>
        <begin position="188"/>
        <end position="202"/>
    </location>
</feature>
<comment type="function">
    <text evidence="1">This is one of the proteins that binds to the 5S RNA in the ribosome where it forms part of the central protuberance.</text>
</comment>
<comment type="subunit">
    <text evidence="1">Part of the 50S ribosomal subunit; part of the 5S rRNA/L5/L18/L25 subcomplex. Contacts the 5S rRNA. Binds to the 5S rRNA independently of L5 and L18.</text>
</comment>
<comment type="similarity">
    <text evidence="1">Belongs to the bacterial ribosomal protein bL25 family. CTC subfamily.</text>
</comment>
<sequence>MASLKSIIRQGKQRRSDLTAIRNSGKVPAVMYGYGQKNVSVKVDEVEFIKVIREVGRNGVIDLGVGSKTIKVMVADYQFDPLKNQITHIDFLAINMSEERTVEVPVHLVGEAVGAKEGGVVDQPLFNLEVTATPENIPEYLEVEISGLEIGDSLSVADLNTTGDFTIENEPEATVVTVVPPTQGPSEAEIEEVEAGDADTPEPEVVGEKEEDEE</sequence>
<reference key="1">
    <citation type="journal article" date="2009" name="Appl. Environ. Microbiol.">
        <title>Genome analysis of the meat starter culture bacterium Staphylococcus carnosus TM300.</title>
        <authorList>
            <person name="Rosenstein R."/>
            <person name="Nerz C."/>
            <person name="Biswas L."/>
            <person name="Resch A."/>
            <person name="Raddatz G."/>
            <person name="Schuster S.C."/>
            <person name="Goetz F."/>
        </authorList>
    </citation>
    <scope>NUCLEOTIDE SEQUENCE [LARGE SCALE GENOMIC DNA]</scope>
    <source>
        <strain>TM300</strain>
    </source>
</reference>
<proteinExistence type="inferred from homology"/>